<accession>P01273</accession>
<evidence type="ECO:0000250" key="1"/>
<evidence type="ECO:0000250" key="2">
    <source>
        <dbReference type="UniProtKB" id="P01274"/>
    </source>
</evidence>
<evidence type="ECO:0000250" key="3">
    <source>
        <dbReference type="UniProtKB" id="P01275"/>
    </source>
</evidence>
<evidence type="ECO:0000250" key="4">
    <source>
        <dbReference type="UniProtKB" id="P06883"/>
    </source>
</evidence>
<evidence type="ECO:0000250" key="5">
    <source>
        <dbReference type="UniProtKB" id="P09686"/>
    </source>
</evidence>
<evidence type="ECO:0000250" key="6">
    <source>
        <dbReference type="UniProtKB" id="P15438"/>
    </source>
</evidence>
<evidence type="ECO:0000250" key="7">
    <source>
        <dbReference type="UniProtKB" id="P55095"/>
    </source>
</evidence>
<evidence type="ECO:0000256" key="8">
    <source>
        <dbReference type="SAM" id="MobiDB-lite"/>
    </source>
</evidence>
<evidence type="ECO:0000305" key="9"/>
<evidence type="ECO:0007829" key="10">
    <source>
        <dbReference type="PDB" id="8GJI"/>
    </source>
</evidence>
<proteinExistence type="evidence at protein level"/>
<sequence length="180" mass="20954">MKNIYIVAGFFVVLVQGSWQHSLQDTEEKSRSFPASQTDPLEDPDQINEDKRHSQGTFTSDYSKYLDSRRAQDFVQWLMNTKRNRNNIAKRHDEFERHAEGTFTSDVSSYLEGQAAKEFIAWLVKGRGRRDFPEEVTIVEELGRRHADGSFSDEMNTILDSLATRDFINWLIQTKITDKK</sequence>
<reference key="1">
    <citation type="journal article" date="1983" name="Nature">
        <title>Hamster preproglucagon contains the sequence of glucagon and two related peptides.</title>
        <authorList>
            <person name="Bell G.I."/>
            <person name="Santerre R.F."/>
            <person name="Mullenbach G.T."/>
        </authorList>
    </citation>
    <scope>NUCLEOTIDE SEQUENCE [MRNA]</scope>
</reference>
<reference key="2">
    <citation type="submission" date="1985-06" db="EMBL/GenBank/DDBJ databases">
        <authorList>
            <person name="Bell G.I."/>
        </authorList>
    </citation>
    <scope>SEQUENCE REVISION TO 12-15</scope>
</reference>
<reference key="3">
    <citation type="journal article" date="2003" name="Mol. Endocrinol.">
        <title>Glucagon-like peptides: regulators of cell proliferation, differentiation, and apoptosis.</title>
        <authorList>
            <person name="Drucker D.J."/>
        </authorList>
    </citation>
    <scope>REVIEW</scope>
</reference>
<reference key="4">
    <citation type="journal article" date="2003" name="Am. J. Physiol.">
        <title>Glucagon and regulation of glucose metabolism.</title>
        <authorList>
            <person name="Jiang G."/>
            <person name="Zhang B.B."/>
        </authorList>
    </citation>
    <scope>REVIEW</scope>
</reference>
<reference key="5">
    <citation type="journal article" date="1999" name="Trends Endocrinol. Metab.">
        <title>Glucagon-like peptide 2.</title>
        <authorList>
            <person name="Drucker D.J."/>
        </authorList>
    </citation>
    <scope>REVIEW</scope>
</reference>
<reference key="6">
    <citation type="journal article" date="1999" name="Endocr. Rev.">
        <title>The glucagon-like peptides.</title>
        <authorList>
            <person name="Kieffer T.J."/>
            <person name="Habener J.F."/>
        </authorList>
    </citation>
    <scope>REVIEW</scope>
</reference>
<protein>
    <recommendedName>
        <fullName>Pro-glucagon</fullName>
    </recommendedName>
    <component>
        <recommendedName>
            <fullName>Glicentin</fullName>
        </recommendedName>
    </component>
    <component>
        <recommendedName>
            <fullName>Glicentin-related polypeptide</fullName>
            <shortName>GRPP</shortName>
        </recommendedName>
    </component>
    <component>
        <recommendedName>
            <fullName>Oxyntomodulin</fullName>
            <shortName>OXM</shortName>
            <shortName>OXY</shortName>
        </recommendedName>
    </component>
    <component>
        <recommendedName>
            <fullName>Glucagon</fullName>
        </recommendedName>
    </component>
    <component>
        <recommendedName>
            <fullName>Glucagon-like peptide 1</fullName>
            <shortName>GLP-1</shortName>
        </recommendedName>
    </component>
    <component>
        <recommendedName>
            <fullName>Glucagon-like peptide 1(7-37)</fullName>
            <shortName>GLP-1(7-37)</shortName>
        </recommendedName>
    </component>
    <component>
        <recommendedName>
            <fullName>Glucagon-like peptide 1(7-36)</fullName>
            <shortName>GLP-1(7-36)</shortName>
        </recommendedName>
    </component>
    <component>
        <recommendedName>
            <fullName>Glucagon-like peptide 2</fullName>
            <shortName>GLP-2</shortName>
        </recommendedName>
    </component>
</protein>
<organism>
    <name type="scientific">Mesocricetus auratus</name>
    <name type="common">Golden hamster</name>
    <dbReference type="NCBI Taxonomy" id="10036"/>
    <lineage>
        <taxon>Eukaryota</taxon>
        <taxon>Metazoa</taxon>
        <taxon>Chordata</taxon>
        <taxon>Craniata</taxon>
        <taxon>Vertebrata</taxon>
        <taxon>Euteleostomi</taxon>
        <taxon>Mammalia</taxon>
        <taxon>Eutheria</taxon>
        <taxon>Euarchontoglires</taxon>
        <taxon>Glires</taxon>
        <taxon>Rodentia</taxon>
        <taxon>Myomorpha</taxon>
        <taxon>Muroidea</taxon>
        <taxon>Cricetidae</taxon>
        <taxon>Cricetinae</taxon>
        <taxon>Mesocricetus</taxon>
    </lineage>
</organism>
<name>GLUC_MESAU</name>
<keyword id="KW-0002">3D-structure</keyword>
<keyword id="KW-0027">Amidation</keyword>
<keyword id="KW-0165">Cleavage on pair of basic residues</keyword>
<keyword id="KW-0372">Hormone</keyword>
<keyword id="KW-0597">Phosphoprotein</keyword>
<keyword id="KW-1185">Reference proteome</keyword>
<keyword id="KW-0964">Secreted</keyword>
<keyword id="KW-0732">Signal</keyword>
<gene>
    <name type="primary">GCG</name>
</gene>
<feature type="signal peptide">
    <location>
        <begin position="1"/>
        <end position="20"/>
    </location>
</feature>
<feature type="peptide" id="PRO_0000011263" description="Glicentin" evidence="2">
    <location>
        <begin position="21"/>
        <end position="89"/>
    </location>
</feature>
<feature type="peptide" id="PRO_0000011264" description="Glicentin-related polypeptide" evidence="5">
    <location>
        <begin position="21"/>
        <end position="50"/>
    </location>
</feature>
<feature type="peptide" id="PRO_0000011265" description="Oxyntomodulin" evidence="4">
    <location>
        <begin position="53"/>
        <end position="89"/>
    </location>
</feature>
<feature type="peptide" id="PRO_0000011266" description="Glucagon" evidence="3">
    <location>
        <begin position="53"/>
        <end position="81"/>
    </location>
</feature>
<feature type="propeptide" id="PRO_0000011267" evidence="3">
    <location>
        <begin position="84"/>
        <end position="89"/>
    </location>
</feature>
<feature type="peptide" id="PRO_0000011268" description="Glucagon-like peptide 1" evidence="3">
    <location>
        <begin position="92"/>
        <end position="128"/>
    </location>
</feature>
<feature type="peptide" id="PRO_0000011269" description="Glucagon-like peptide 1(7-37)" evidence="3">
    <location>
        <begin position="98"/>
        <end position="128"/>
    </location>
</feature>
<feature type="peptide" id="PRO_0000011270" description="Glucagon-like peptide 1(7-36)" evidence="3">
    <location>
        <begin position="98"/>
        <end position="127"/>
    </location>
</feature>
<feature type="propeptide" id="PRO_0000011271" evidence="6">
    <location>
        <begin position="131"/>
        <end position="145"/>
    </location>
</feature>
<feature type="peptide" id="PRO_0000011272" description="Glucagon-like peptide 2" evidence="6">
    <location>
        <begin position="146"/>
        <end position="178"/>
    </location>
</feature>
<feature type="region of interest" description="Disordered" evidence="8">
    <location>
        <begin position="25"/>
        <end position="59"/>
    </location>
</feature>
<feature type="site" description="Cleavage; by PCSK2" evidence="1">
    <location>
        <begin position="52"/>
        <end position="53"/>
    </location>
</feature>
<feature type="site" description="Cleavage; by PCSK1 and PCSK2" evidence="1">
    <location>
        <begin position="83"/>
        <end position="84"/>
    </location>
</feature>
<feature type="site" description="Cleavage; by PCSK1" evidence="1">
    <location>
        <begin position="91"/>
        <end position="92"/>
    </location>
</feature>
<feature type="site" description="Cleavage; by PCSK1" evidence="1">
    <location>
        <begin position="97"/>
        <end position="98"/>
    </location>
</feature>
<feature type="site" description="Cleavage; by PCSK1" evidence="1">
    <location>
        <begin position="130"/>
        <end position="131"/>
    </location>
</feature>
<feature type="site" description="Cleavage; by PCSK1" evidence="1">
    <location>
        <begin position="145"/>
        <end position="146"/>
    </location>
</feature>
<feature type="modified residue" description="Phosphoserine" evidence="7">
    <location>
        <position position="54"/>
    </location>
</feature>
<feature type="modified residue" description="Phosphoserine" evidence="7">
    <location>
        <position position="105"/>
    </location>
</feature>
<feature type="modified residue" description="Phosphoserine" evidence="7">
    <location>
        <position position="108"/>
    </location>
</feature>
<feature type="modified residue" description="Arginine amide" evidence="1">
    <location>
        <position position="127"/>
    </location>
</feature>
<feature type="modified residue" description="Phosphoserine" evidence="7">
    <location>
        <position position="150"/>
    </location>
</feature>
<feature type="modified residue" description="Phosphoserine" evidence="7">
    <location>
        <position position="152"/>
    </location>
</feature>
<feature type="helix" evidence="10">
    <location>
        <begin position="64"/>
        <end position="66"/>
    </location>
</feature>
<feature type="helix" evidence="10">
    <location>
        <begin position="68"/>
        <end position="79"/>
    </location>
</feature>
<comment type="function">
    <molecule>Glucagon</molecule>
    <text evidence="7">Plays a key role in glucose metabolism and homeostasis. Regulates blood glucose by increasing gluconeogenesis and decreasing glycolysis. A counterregulatory hormone of insulin, raises plasma glucose levels in response to insulin-induced hypoglycemia. Plays an important role in initiating and maintaining hyperglycemic conditions in diabetes.</text>
</comment>
<comment type="function">
    <molecule>Glucagon-like peptide 1</molecule>
    <text evidence="7">Potent stimulator of glucose-dependent insulin release. Also stimulates insulin release in response to IL6. Plays important roles on gastric motility and the suppression of plasma glucagon levels. May be involved in the suppression of satiety and stimulation of glucose disposal in peripheral tissues, independent of the actions of insulin. Has growth-promoting activities on intestinal epithelium. May also regulate the hypothalamic pituitary axis (HPA) via effects on LH, TSH, CRH, oxytocin, and vasopressin secretion. Increases islet mass through stimulation of islet neogenesis and pancreatic beta cell proliferation. Inhibits beta cell apoptosis.</text>
</comment>
<comment type="function">
    <molecule>Glucagon-like peptide 2</molecule>
    <text evidence="7">Stimulates intestinal growth and up-regulates villus height in the small intestine, concomitant with increased crypt cell proliferation and decreased enterocyte apoptosis. The gastrointestinal tract, from the stomach to the colon is the principal target for GLP-2 action. Plays a key role in nutrient homeostasis, enhancing nutrient assimilation through enhanced gastrointestinal function, as well as increasing nutrient disposal. Stimulates intestinal glucose transport and decreases mucosal permeability.</text>
</comment>
<comment type="function">
    <molecule>Oxyntomodulin</molecule>
    <text evidence="7">Significantly reduces food intake. Inhibits gastric emptying in humans. Suppression of gastric emptying may lead to increased gastric distension, which may contribute to satiety by causing a sensation of fullness.</text>
</comment>
<comment type="function">
    <molecule>Glicentin</molecule>
    <text evidence="7">May modulate gastric acid secretion and the gastro-pyloro-duodenal activity. May play an important role in intestinal mucosal growth in the early period of life.</text>
</comment>
<comment type="subcellular location">
    <subcellularLocation>
        <location evidence="3">Secreted</location>
    </subcellularLocation>
</comment>
<comment type="subcellular location">
    <molecule>Glucagon-like peptide 1</molecule>
    <subcellularLocation>
        <location evidence="3">Secreted</location>
    </subcellularLocation>
</comment>
<comment type="induction">
    <text evidence="1">Glucagon release is stimulated by hypoglycemia and inhibited by hyperglycemia, insulin, and somatostatin. GLP-1 and GLP-2 are induced in response to nutrient ingestion (By similarity).</text>
</comment>
<comment type="PTM">
    <text evidence="1">Proglucagon is post-translationally processed in a tissue-specific manner in pancreatic A cells and intestinal L cells. In pancreatic A cells, the major bioactive hormone is glucagon cleaved by PCSK2/PC2. In the intestinal L cells PCSK1/PC1 liberates GLP-1, GLP-2, glicentin and oxyntomodulin. GLP-1 is further N-terminally truncated by post-translational processing in the intestinal L cells resulting in GLP-1(7-37) GLP-1-(7-36)amide. The C-terminal amidation is neither important for the metabolism of GLP-1 nor for its effects on the endocrine pancreas (By similarity).</text>
</comment>
<comment type="similarity">
    <text evidence="9">Belongs to the glucagon family.</text>
</comment>
<dbReference type="EMBL" id="J00059">
    <property type="protein sequence ID" value="AAA37074.1"/>
    <property type="molecule type" value="mRNA"/>
</dbReference>
<dbReference type="PIR" id="A01539">
    <property type="entry name" value="GCHY"/>
</dbReference>
<dbReference type="PDB" id="8GJI">
    <property type="method" value="X-ray"/>
    <property type="resolution" value="1.81 A"/>
    <property type="chains" value="B=53-81"/>
</dbReference>
<dbReference type="PDBsum" id="8GJI"/>
<dbReference type="BMRB" id="P01273"/>
<dbReference type="SMR" id="P01273"/>
<dbReference type="Proteomes" id="UP000189706">
    <property type="component" value="Unplaced"/>
</dbReference>
<dbReference type="GO" id="GO:0005615">
    <property type="term" value="C:extracellular space"/>
    <property type="evidence" value="ECO:0000250"/>
    <property type="project" value="UniProtKB"/>
</dbReference>
<dbReference type="GO" id="GO:0031769">
    <property type="term" value="F:glucagon receptor binding"/>
    <property type="evidence" value="ECO:0007669"/>
    <property type="project" value="TreeGrafter"/>
</dbReference>
<dbReference type="GO" id="GO:0005179">
    <property type="term" value="F:hormone activity"/>
    <property type="evidence" value="ECO:0007669"/>
    <property type="project" value="UniProtKB-KW"/>
</dbReference>
<dbReference type="GO" id="GO:0007188">
    <property type="term" value="P:adenylate cyclase-modulating G protein-coupled receptor signaling pathway"/>
    <property type="evidence" value="ECO:0007669"/>
    <property type="project" value="TreeGrafter"/>
</dbReference>
<dbReference type="GO" id="GO:0042593">
    <property type="term" value="P:glucose homeostasis"/>
    <property type="evidence" value="ECO:0000250"/>
    <property type="project" value="UniProtKB"/>
</dbReference>
<dbReference type="GO" id="GO:0043066">
    <property type="term" value="P:negative regulation of apoptotic process"/>
    <property type="evidence" value="ECO:0007669"/>
    <property type="project" value="TreeGrafter"/>
</dbReference>
<dbReference type="GO" id="GO:0035774">
    <property type="term" value="P:positive regulation of insulin secretion involved in cellular response to glucose stimulus"/>
    <property type="evidence" value="ECO:0007669"/>
    <property type="project" value="TreeGrafter"/>
</dbReference>
<dbReference type="GO" id="GO:0010737">
    <property type="term" value="P:protein kinase A signaling"/>
    <property type="evidence" value="ECO:0007669"/>
    <property type="project" value="TreeGrafter"/>
</dbReference>
<dbReference type="GO" id="GO:0050796">
    <property type="term" value="P:regulation of insulin secretion"/>
    <property type="evidence" value="ECO:0000250"/>
    <property type="project" value="UniProtKB"/>
</dbReference>
<dbReference type="GO" id="GO:0014823">
    <property type="term" value="P:response to activity"/>
    <property type="evidence" value="ECO:0000250"/>
    <property type="project" value="UniProtKB"/>
</dbReference>
<dbReference type="Gene3D" id="6.10.250.590">
    <property type="match status" value="3"/>
</dbReference>
<dbReference type="InterPro" id="IPR015550">
    <property type="entry name" value="Glucagon"/>
</dbReference>
<dbReference type="InterPro" id="IPR000532">
    <property type="entry name" value="Glucagon_GIP_secretin_VIP"/>
</dbReference>
<dbReference type="PANTHER" id="PTHR11418">
    <property type="entry name" value="GLUCAGON"/>
    <property type="match status" value="1"/>
</dbReference>
<dbReference type="PANTHER" id="PTHR11418:SF0">
    <property type="entry name" value="PRO-GLUCAGON"/>
    <property type="match status" value="1"/>
</dbReference>
<dbReference type="Pfam" id="PF00123">
    <property type="entry name" value="Hormone_2"/>
    <property type="match status" value="3"/>
</dbReference>
<dbReference type="PRINTS" id="PR00275">
    <property type="entry name" value="GLUCAGON"/>
</dbReference>
<dbReference type="SMART" id="SM00070">
    <property type="entry name" value="GLUCA"/>
    <property type="match status" value="3"/>
</dbReference>
<dbReference type="PROSITE" id="PS00260">
    <property type="entry name" value="GLUCAGON"/>
    <property type="match status" value="4"/>
</dbReference>